<organism>
    <name type="scientific">Xanthomonas oryzae pv. oryzae (strain PXO99A)</name>
    <dbReference type="NCBI Taxonomy" id="360094"/>
    <lineage>
        <taxon>Bacteria</taxon>
        <taxon>Pseudomonadati</taxon>
        <taxon>Pseudomonadota</taxon>
        <taxon>Gammaproteobacteria</taxon>
        <taxon>Lysobacterales</taxon>
        <taxon>Lysobacteraceae</taxon>
        <taxon>Xanthomonas</taxon>
    </lineage>
</organism>
<sequence>MSTNDNWYIEHFQPTGSAIGFRISGKLDEVQSLFQKIEIYQTTDWGKLMLIDGAVMLTSRDNFFYHEMISHPALFTHPTPKRVVIIGGGDCGTLREVLKHPGVESATQCDIDEQVTRMSEKYFPELCDSNHDARAELLFDDGVAYMANCPAGSVDIVIVDSTDPVGPAEGLFNKAFYESCFKALKDDGLLVQQSESPLALLDLIKEMRTEMGKAGFQSFKTLPFPQPCYPTGWWSVTMASKQAKADFAFRQGAAQAKGFETLYYTAHLHTGVLVAPPFVAKALGE</sequence>
<accession>B2SHF6</accession>
<comment type="function">
    <text evidence="1">Catalyzes the irreversible transfer of a propylamine group from the amino donor S-adenosylmethioninamine (decarboxy-AdoMet) to putrescine (1,4-diaminobutane) to yield spermidine.</text>
</comment>
<comment type="catalytic activity">
    <reaction evidence="1">
        <text>S-adenosyl 3-(methylsulfanyl)propylamine + putrescine = S-methyl-5'-thioadenosine + spermidine + H(+)</text>
        <dbReference type="Rhea" id="RHEA:12721"/>
        <dbReference type="ChEBI" id="CHEBI:15378"/>
        <dbReference type="ChEBI" id="CHEBI:17509"/>
        <dbReference type="ChEBI" id="CHEBI:57443"/>
        <dbReference type="ChEBI" id="CHEBI:57834"/>
        <dbReference type="ChEBI" id="CHEBI:326268"/>
        <dbReference type="EC" id="2.5.1.16"/>
    </reaction>
</comment>
<comment type="pathway">
    <text evidence="1">Amine and polyamine biosynthesis; spermidine biosynthesis; spermidine from putrescine: step 1/1.</text>
</comment>
<comment type="subunit">
    <text evidence="1">Homodimer or homotetramer.</text>
</comment>
<comment type="subcellular location">
    <subcellularLocation>
        <location evidence="1">Cytoplasm</location>
    </subcellularLocation>
</comment>
<comment type="similarity">
    <text evidence="1">Belongs to the spermidine/spermine synthase family.</text>
</comment>
<dbReference type="EC" id="2.5.1.16" evidence="1"/>
<dbReference type="EMBL" id="CP000967">
    <property type="protein sequence ID" value="ACD56876.1"/>
    <property type="molecule type" value="Genomic_DNA"/>
</dbReference>
<dbReference type="RefSeq" id="WP_011257190.1">
    <property type="nucleotide sequence ID" value="NC_010717.2"/>
</dbReference>
<dbReference type="SMR" id="B2SHF6"/>
<dbReference type="KEGG" id="xop:PXO_03650"/>
<dbReference type="eggNOG" id="COG0421">
    <property type="taxonomic scope" value="Bacteria"/>
</dbReference>
<dbReference type="HOGENOM" id="CLU_048199_0_0_6"/>
<dbReference type="UniPathway" id="UPA00248">
    <property type="reaction ID" value="UER00314"/>
</dbReference>
<dbReference type="Proteomes" id="UP000001740">
    <property type="component" value="Chromosome"/>
</dbReference>
<dbReference type="GO" id="GO:0005829">
    <property type="term" value="C:cytosol"/>
    <property type="evidence" value="ECO:0007669"/>
    <property type="project" value="TreeGrafter"/>
</dbReference>
<dbReference type="GO" id="GO:0004766">
    <property type="term" value="F:spermidine synthase activity"/>
    <property type="evidence" value="ECO:0007669"/>
    <property type="project" value="UniProtKB-UniRule"/>
</dbReference>
<dbReference type="GO" id="GO:0008295">
    <property type="term" value="P:spermidine biosynthetic process"/>
    <property type="evidence" value="ECO:0007669"/>
    <property type="project" value="UniProtKB-UniRule"/>
</dbReference>
<dbReference type="FunFam" id="3.40.50.150:FF:000290">
    <property type="entry name" value="Polyamine aminopropyltransferase"/>
    <property type="match status" value="1"/>
</dbReference>
<dbReference type="Gene3D" id="2.30.140.10">
    <property type="entry name" value="Spermidine synthase, tetramerisation domain"/>
    <property type="match status" value="1"/>
</dbReference>
<dbReference type="Gene3D" id="3.40.50.150">
    <property type="entry name" value="Vaccinia Virus protein VP39"/>
    <property type="match status" value="1"/>
</dbReference>
<dbReference type="HAMAP" id="MF_00198">
    <property type="entry name" value="Spermidine_synth"/>
    <property type="match status" value="1"/>
</dbReference>
<dbReference type="InterPro" id="IPR030374">
    <property type="entry name" value="PABS"/>
</dbReference>
<dbReference type="InterPro" id="IPR030373">
    <property type="entry name" value="PABS_CS"/>
</dbReference>
<dbReference type="InterPro" id="IPR029063">
    <property type="entry name" value="SAM-dependent_MTases_sf"/>
</dbReference>
<dbReference type="InterPro" id="IPR001045">
    <property type="entry name" value="Spermi_synthase"/>
</dbReference>
<dbReference type="InterPro" id="IPR035246">
    <property type="entry name" value="Spermidine_synt_N"/>
</dbReference>
<dbReference type="InterPro" id="IPR037163">
    <property type="entry name" value="Spermidine_synt_N_sf"/>
</dbReference>
<dbReference type="NCBIfam" id="NF002010">
    <property type="entry name" value="PRK00811.1"/>
    <property type="match status" value="1"/>
</dbReference>
<dbReference type="NCBIfam" id="TIGR00417">
    <property type="entry name" value="speE"/>
    <property type="match status" value="1"/>
</dbReference>
<dbReference type="PANTHER" id="PTHR11558:SF11">
    <property type="entry name" value="SPERMIDINE SYNTHASE"/>
    <property type="match status" value="1"/>
</dbReference>
<dbReference type="PANTHER" id="PTHR11558">
    <property type="entry name" value="SPERMIDINE/SPERMINE SYNTHASE"/>
    <property type="match status" value="1"/>
</dbReference>
<dbReference type="Pfam" id="PF17284">
    <property type="entry name" value="Spermine_synt_N"/>
    <property type="match status" value="1"/>
</dbReference>
<dbReference type="Pfam" id="PF01564">
    <property type="entry name" value="Spermine_synth"/>
    <property type="match status" value="1"/>
</dbReference>
<dbReference type="SUPFAM" id="SSF53335">
    <property type="entry name" value="S-adenosyl-L-methionine-dependent methyltransferases"/>
    <property type="match status" value="1"/>
</dbReference>
<dbReference type="PROSITE" id="PS01330">
    <property type="entry name" value="PABS_1"/>
    <property type="match status" value="1"/>
</dbReference>
<dbReference type="PROSITE" id="PS51006">
    <property type="entry name" value="PABS_2"/>
    <property type="match status" value="1"/>
</dbReference>
<protein>
    <recommendedName>
        <fullName evidence="1">Polyamine aminopropyltransferase</fullName>
    </recommendedName>
    <alternativeName>
        <fullName evidence="1">Putrescine aminopropyltransferase</fullName>
        <shortName evidence="1">PAPT</shortName>
    </alternativeName>
    <alternativeName>
        <fullName evidence="1">Spermidine synthase</fullName>
        <shortName evidence="1">SPDS</shortName>
        <shortName evidence="1">SPDSY</shortName>
        <ecNumber evidence="1">2.5.1.16</ecNumber>
    </alternativeName>
</protein>
<reference key="1">
    <citation type="journal article" date="2008" name="BMC Genomics">
        <title>Genome sequence and rapid evolution of the rice pathogen Xanthomonas oryzae pv. oryzae PXO99A.</title>
        <authorList>
            <person name="Salzberg S.L."/>
            <person name="Sommer D.D."/>
            <person name="Schatz M.C."/>
            <person name="Phillippy A.M."/>
            <person name="Rabinowicz P.D."/>
            <person name="Tsuge S."/>
            <person name="Furutani A."/>
            <person name="Ochiai H."/>
            <person name="Delcher A.L."/>
            <person name="Kelley D."/>
            <person name="Madupu R."/>
            <person name="Puiu D."/>
            <person name="Radune D."/>
            <person name="Shumway M."/>
            <person name="Trapnell C."/>
            <person name="Aparna G."/>
            <person name="Jha G."/>
            <person name="Pandey A."/>
            <person name="Patil P.B."/>
            <person name="Ishihara H."/>
            <person name="Meyer D.F."/>
            <person name="Szurek B."/>
            <person name="Verdier V."/>
            <person name="Koebnik R."/>
            <person name="Dow J.M."/>
            <person name="Ryan R.P."/>
            <person name="Hirata H."/>
            <person name="Tsuyumu S."/>
            <person name="Won Lee S."/>
            <person name="Seo Y.-S."/>
            <person name="Sriariyanum M."/>
            <person name="Ronald P.C."/>
            <person name="Sonti R.V."/>
            <person name="Van Sluys M.-A."/>
            <person name="Leach J.E."/>
            <person name="White F.F."/>
            <person name="Bogdanove A.J."/>
        </authorList>
    </citation>
    <scope>NUCLEOTIDE SEQUENCE [LARGE SCALE GENOMIC DNA]</scope>
    <source>
        <strain>PXO99A</strain>
    </source>
</reference>
<name>SPEE_XANOP</name>
<keyword id="KW-0963">Cytoplasm</keyword>
<keyword id="KW-0620">Polyamine biosynthesis</keyword>
<keyword id="KW-0745">Spermidine biosynthesis</keyword>
<keyword id="KW-0808">Transferase</keyword>
<proteinExistence type="inferred from homology"/>
<feature type="chain" id="PRO_1000099307" description="Polyamine aminopropyltransferase">
    <location>
        <begin position="1"/>
        <end position="285"/>
    </location>
</feature>
<feature type="domain" description="PABS" evidence="1">
    <location>
        <begin position="5"/>
        <end position="241"/>
    </location>
</feature>
<feature type="active site" description="Proton acceptor" evidence="1">
    <location>
        <position position="160"/>
    </location>
</feature>
<feature type="binding site" evidence="1">
    <location>
        <position position="35"/>
    </location>
    <ligand>
        <name>S-methyl-5'-thioadenosine</name>
        <dbReference type="ChEBI" id="CHEBI:17509"/>
    </ligand>
</feature>
<feature type="binding site" evidence="1">
    <location>
        <position position="66"/>
    </location>
    <ligand>
        <name>spermidine</name>
        <dbReference type="ChEBI" id="CHEBI:57834"/>
    </ligand>
</feature>
<feature type="binding site" evidence="1">
    <location>
        <position position="90"/>
    </location>
    <ligand>
        <name>spermidine</name>
        <dbReference type="ChEBI" id="CHEBI:57834"/>
    </ligand>
</feature>
<feature type="binding site" evidence="1">
    <location>
        <position position="110"/>
    </location>
    <ligand>
        <name>S-methyl-5'-thioadenosine</name>
        <dbReference type="ChEBI" id="CHEBI:17509"/>
    </ligand>
</feature>
<feature type="binding site" evidence="1">
    <location>
        <begin position="141"/>
        <end position="142"/>
    </location>
    <ligand>
        <name>S-methyl-5'-thioadenosine</name>
        <dbReference type="ChEBI" id="CHEBI:17509"/>
    </ligand>
</feature>
<feature type="binding site" evidence="1">
    <location>
        <begin position="160"/>
        <end position="163"/>
    </location>
    <ligand>
        <name>spermidine</name>
        <dbReference type="ChEBI" id="CHEBI:57834"/>
    </ligand>
</feature>
<feature type="binding site" evidence="1">
    <location>
        <position position="167"/>
    </location>
    <ligand>
        <name>S-methyl-5'-thioadenosine</name>
        <dbReference type="ChEBI" id="CHEBI:17509"/>
    </ligand>
</feature>
<gene>
    <name evidence="1" type="primary">speE</name>
    <name type="ordered locus">PXO_03650</name>
</gene>
<evidence type="ECO:0000255" key="1">
    <source>
        <dbReference type="HAMAP-Rule" id="MF_00198"/>
    </source>
</evidence>